<proteinExistence type="evidence at protein level"/>
<reference evidence="16" key="1">
    <citation type="journal article" date="2000" name="Science">
        <title>The genome sequence of Drosophila melanogaster.</title>
        <authorList>
            <person name="Adams M.D."/>
            <person name="Celniker S.E."/>
            <person name="Holt R.A."/>
            <person name="Evans C.A."/>
            <person name="Gocayne J.D."/>
            <person name="Amanatides P.G."/>
            <person name="Scherer S.E."/>
            <person name="Li P.W."/>
            <person name="Hoskins R.A."/>
            <person name="Galle R.F."/>
            <person name="George R.A."/>
            <person name="Lewis S.E."/>
            <person name="Richards S."/>
            <person name="Ashburner M."/>
            <person name="Henderson S.N."/>
            <person name="Sutton G.G."/>
            <person name="Wortman J.R."/>
            <person name="Yandell M.D."/>
            <person name="Zhang Q."/>
            <person name="Chen L.X."/>
            <person name="Brandon R.C."/>
            <person name="Rogers Y.-H.C."/>
            <person name="Blazej R.G."/>
            <person name="Champe M."/>
            <person name="Pfeiffer B.D."/>
            <person name="Wan K.H."/>
            <person name="Doyle C."/>
            <person name="Baxter E.G."/>
            <person name="Helt G."/>
            <person name="Nelson C.R."/>
            <person name="Miklos G.L.G."/>
            <person name="Abril J.F."/>
            <person name="Agbayani A."/>
            <person name="An H.-J."/>
            <person name="Andrews-Pfannkoch C."/>
            <person name="Baldwin D."/>
            <person name="Ballew R.M."/>
            <person name="Basu A."/>
            <person name="Baxendale J."/>
            <person name="Bayraktaroglu L."/>
            <person name="Beasley E.M."/>
            <person name="Beeson K.Y."/>
            <person name="Benos P.V."/>
            <person name="Berman B.P."/>
            <person name="Bhandari D."/>
            <person name="Bolshakov S."/>
            <person name="Borkova D."/>
            <person name="Botchan M.R."/>
            <person name="Bouck J."/>
            <person name="Brokstein P."/>
            <person name="Brottier P."/>
            <person name="Burtis K.C."/>
            <person name="Busam D.A."/>
            <person name="Butler H."/>
            <person name="Cadieu E."/>
            <person name="Center A."/>
            <person name="Chandra I."/>
            <person name="Cherry J.M."/>
            <person name="Cawley S."/>
            <person name="Dahlke C."/>
            <person name="Davenport L.B."/>
            <person name="Davies P."/>
            <person name="de Pablos B."/>
            <person name="Delcher A."/>
            <person name="Deng Z."/>
            <person name="Mays A.D."/>
            <person name="Dew I."/>
            <person name="Dietz S.M."/>
            <person name="Dodson K."/>
            <person name="Doup L.E."/>
            <person name="Downes M."/>
            <person name="Dugan-Rocha S."/>
            <person name="Dunkov B.C."/>
            <person name="Dunn P."/>
            <person name="Durbin K.J."/>
            <person name="Evangelista C.C."/>
            <person name="Ferraz C."/>
            <person name="Ferriera S."/>
            <person name="Fleischmann W."/>
            <person name="Fosler C."/>
            <person name="Gabrielian A.E."/>
            <person name="Garg N.S."/>
            <person name="Gelbart W.M."/>
            <person name="Glasser K."/>
            <person name="Glodek A."/>
            <person name="Gong F."/>
            <person name="Gorrell J.H."/>
            <person name="Gu Z."/>
            <person name="Guan P."/>
            <person name="Harris M."/>
            <person name="Harris N.L."/>
            <person name="Harvey D.A."/>
            <person name="Heiman T.J."/>
            <person name="Hernandez J.R."/>
            <person name="Houck J."/>
            <person name="Hostin D."/>
            <person name="Houston K.A."/>
            <person name="Howland T.J."/>
            <person name="Wei M.-H."/>
            <person name="Ibegwam C."/>
            <person name="Jalali M."/>
            <person name="Kalush F."/>
            <person name="Karpen G.H."/>
            <person name="Ke Z."/>
            <person name="Kennison J.A."/>
            <person name="Ketchum K.A."/>
            <person name="Kimmel B.E."/>
            <person name="Kodira C.D."/>
            <person name="Kraft C.L."/>
            <person name="Kravitz S."/>
            <person name="Kulp D."/>
            <person name="Lai Z."/>
            <person name="Lasko P."/>
            <person name="Lei Y."/>
            <person name="Levitsky A.A."/>
            <person name="Li J.H."/>
            <person name="Li Z."/>
            <person name="Liang Y."/>
            <person name="Lin X."/>
            <person name="Liu X."/>
            <person name="Mattei B."/>
            <person name="McIntosh T.C."/>
            <person name="McLeod M.P."/>
            <person name="McPherson D."/>
            <person name="Merkulov G."/>
            <person name="Milshina N.V."/>
            <person name="Mobarry C."/>
            <person name="Morris J."/>
            <person name="Moshrefi A."/>
            <person name="Mount S.M."/>
            <person name="Moy M."/>
            <person name="Murphy B."/>
            <person name="Murphy L."/>
            <person name="Muzny D.M."/>
            <person name="Nelson D.L."/>
            <person name="Nelson D.R."/>
            <person name="Nelson K.A."/>
            <person name="Nixon K."/>
            <person name="Nusskern D.R."/>
            <person name="Pacleb J.M."/>
            <person name="Palazzolo M."/>
            <person name="Pittman G.S."/>
            <person name="Pan S."/>
            <person name="Pollard J."/>
            <person name="Puri V."/>
            <person name="Reese M.G."/>
            <person name="Reinert K."/>
            <person name="Remington K."/>
            <person name="Saunders R.D.C."/>
            <person name="Scheeler F."/>
            <person name="Shen H."/>
            <person name="Shue B.C."/>
            <person name="Siden-Kiamos I."/>
            <person name="Simpson M."/>
            <person name="Skupski M.P."/>
            <person name="Smith T.J."/>
            <person name="Spier E."/>
            <person name="Spradling A.C."/>
            <person name="Stapleton M."/>
            <person name="Strong R."/>
            <person name="Sun E."/>
            <person name="Svirskas R."/>
            <person name="Tector C."/>
            <person name="Turner R."/>
            <person name="Venter E."/>
            <person name="Wang A.H."/>
            <person name="Wang X."/>
            <person name="Wang Z.-Y."/>
            <person name="Wassarman D.A."/>
            <person name="Weinstock G.M."/>
            <person name="Weissenbach J."/>
            <person name="Williams S.M."/>
            <person name="Woodage T."/>
            <person name="Worley K.C."/>
            <person name="Wu D."/>
            <person name="Yang S."/>
            <person name="Yao Q.A."/>
            <person name="Ye J."/>
            <person name="Yeh R.-F."/>
            <person name="Zaveri J.S."/>
            <person name="Zhan M."/>
            <person name="Zhang G."/>
            <person name="Zhao Q."/>
            <person name="Zheng L."/>
            <person name="Zheng X.H."/>
            <person name="Zhong F.N."/>
            <person name="Zhong W."/>
            <person name="Zhou X."/>
            <person name="Zhu S.C."/>
            <person name="Zhu X."/>
            <person name="Smith H.O."/>
            <person name="Gibbs R.A."/>
            <person name="Myers E.W."/>
            <person name="Rubin G.M."/>
            <person name="Venter J.C."/>
        </authorList>
    </citation>
    <scope>NUCLEOTIDE SEQUENCE [LARGE SCALE GENOMIC DNA]</scope>
    <source>
        <strain evidence="16">Berkeley</strain>
    </source>
</reference>
<reference evidence="16" key="2">
    <citation type="journal article" date="2002" name="Genome Biol.">
        <title>Annotation of the Drosophila melanogaster euchromatic genome: a systematic review.</title>
        <authorList>
            <person name="Misra S."/>
            <person name="Crosby M.A."/>
            <person name="Mungall C.J."/>
            <person name="Matthews B.B."/>
            <person name="Campbell K.S."/>
            <person name="Hradecky P."/>
            <person name="Huang Y."/>
            <person name="Kaminker J.S."/>
            <person name="Millburn G.H."/>
            <person name="Prochnik S.E."/>
            <person name="Smith C.D."/>
            <person name="Tupy J.L."/>
            <person name="Whitfield E.J."/>
            <person name="Bayraktaroglu L."/>
            <person name="Berman B.P."/>
            <person name="Bettencourt B.R."/>
            <person name="Celniker S.E."/>
            <person name="de Grey A.D.N.J."/>
            <person name="Drysdale R.A."/>
            <person name="Harris N.L."/>
            <person name="Richter J."/>
            <person name="Russo S."/>
            <person name="Schroeder A.J."/>
            <person name="Shu S.Q."/>
            <person name="Stapleton M."/>
            <person name="Yamada C."/>
            <person name="Ashburner M."/>
            <person name="Gelbart W.M."/>
            <person name="Rubin G.M."/>
            <person name="Lewis S.E."/>
        </authorList>
    </citation>
    <scope>GENOME REANNOTATION</scope>
    <source>
        <strain evidence="16">Berkeley</strain>
    </source>
</reference>
<reference evidence="14" key="3">
    <citation type="submission" date="2004-01" db="EMBL/GenBank/DDBJ databases">
        <authorList>
            <person name="Stapleton M."/>
            <person name="Carlson J."/>
            <person name="Chavez C."/>
            <person name="Frise E."/>
            <person name="George R."/>
            <person name="Pacleb J."/>
            <person name="Park S."/>
            <person name="Wan K."/>
            <person name="Yu C."/>
            <person name="Rubin G.M."/>
            <person name="Celniker S."/>
        </authorList>
    </citation>
    <scope>NUCLEOTIDE SEQUENCE [LARGE SCALE MRNA]</scope>
    <source>
        <strain evidence="14">Berkeley</strain>
        <tissue evidence="14">Testis</tissue>
    </source>
</reference>
<reference evidence="13" key="4">
    <citation type="journal article" date="2002" name="Genome Biol.">
        <title>A Drosophila full-length cDNA resource.</title>
        <authorList>
            <person name="Stapleton M."/>
            <person name="Carlson J.W."/>
            <person name="Brokstein P."/>
            <person name="Yu C."/>
            <person name="Champe M."/>
            <person name="George R.A."/>
            <person name="Guarin H."/>
            <person name="Kronmiller B."/>
            <person name="Pacleb J.M."/>
            <person name="Park S."/>
            <person name="Wan K.H."/>
            <person name="Rubin G.M."/>
            <person name="Celniker S.E."/>
        </authorList>
    </citation>
    <scope>NUCLEOTIDE SEQUENCE [LARGE SCALE MRNA] OF 605-994</scope>
    <source>
        <strain evidence="13">Berkeley</strain>
        <tissue evidence="13">Embryo</tissue>
    </source>
</reference>
<reference evidence="12" key="5">
    <citation type="journal article" date="2011" name="Mol. Cell. Biol.">
        <title>A subset of Drosophila integrator proteins is essential for efficient U7 snRNA and spliceosomal snRNA 3'-end formation.</title>
        <authorList>
            <person name="Ezzeddine N."/>
            <person name="Chen J."/>
            <person name="Waltenspiel B."/>
            <person name="Burch B."/>
            <person name="Albrecht T."/>
            <person name="Zhuo M."/>
            <person name="Warren W.D."/>
            <person name="Marzluff W.F."/>
            <person name="Wagner E.J."/>
        </authorList>
    </citation>
    <scope>FUNCTION</scope>
    <scope>IDENTIFICATION IN THE INTEGRATOR COMPLEX</scope>
</reference>
<reference evidence="12" key="6">
    <citation type="journal article" date="2012" name="RNA">
        <title>An RNAi screen identifies additional members of the Drosophila Integrator complex and a requirement for cyclin C/Cdk8 in snRNA 3'-end formation.</title>
        <authorList>
            <person name="Chen J."/>
            <person name="Ezzeddine N."/>
            <person name="Waltenspiel B."/>
            <person name="Albrecht T.R."/>
            <person name="Warren W.D."/>
            <person name="Marzluff W.F."/>
            <person name="Wagner E.J."/>
        </authorList>
    </citation>
    <scope>FUNCTION</scope>
</reference>
<reference key="7">
    <citation type="journal article" date="2019" name="Genes Dev.">
        <title>The Integrator complex cleaves nascent mRNAs to attenuate transcription.</title>
        <authorList>
            <person name="Tatomer D.C."/>
            <person name="Elrod N.D."/>
            <person name="Liang D."/>
            <person name="Xiao M.S."/>
            <person name="Jiang J.Z."/>
            <person name="Jonathan M."/>
            <person name="Huang K.L."/>
            <person name="Wagner E.J."/>
            <person name="Cherry S."/>
            <person name="Wilusz J.E."/>
        </authorList>
    </citation>
    <scope>IDENTIFICATION IN THE INTEGRATOR COMPLEX</scope>
</reference>
<reference key="8">
    <citation type="journal article" date="2020" name="Mol. Cell">
        <title>Integrator recruits protein phosphatase 2A to prevent pause release and facilitate transcription termination.</title>
        <authorList>
            <person name="Huang K.L."/>
            <person name="Jee D."/>
            <person name="Stein C.B."/>
            <person name="Elrod N.D."/>
            <person name="Henriques T."/>
            <person name="Mascibroda L.G."/>
            <person name="Baillat D."/>
            <person name="Russell W.K."/>
            <person name="Adelman K."/>
            <person name="Wagner E.J."/>
        </authorList>
    </citation>
    <scope>FUNCTION</scope>
    <scope>IDENTIFICATION IN THE INTAC COMPLEX</scope>
</reference>
<reference key="9">
    <citation type="journal article" date="2023" name="Mol. Cell">
        <title>IntS6 and the Integrator phosphatase module tune the efficiency of select premature transcription termination events.</title>
        <authorList>
            <person name="Fujiwara R."/>
            <person name="Zhai S.N."/>
            <person name="Liang D."/>
            <person name="Shah A.P."/>
            <person name="Tracey M."/>
            <person name="Ma X.K."/>
            <person name="Fields C.J."/>
            <person name="Mendoza-Figueroa M.S."/>
            <person name="Meline M.C."/>
            <person name="Tatomer D.C."/>
            <person name="Yang L."/>
            <person name="Wilusz J.E."/>
        </authorList>
    </citation>
    <scope>IDENTIFICATION IN THE INTAC COMPLEX</scope>
</reference>
<reference key="10">
    <citation type="journal article" date="2024" name="Mol. Cell">
        <title>Cytoplasmic binding partners of the Integrator endonuclease INTS11 and its paralog CPSF73 are required for their nuclear function.</title>
        <authorList>
            <person name="Lin M.H."/>
            <person name="Jensen M.K."/>
            <person name="Elrod N.D."/>
            <person name="Chu H.F."/>
            <person name="Haseley M."/>
            <person name="Beam A.C."/>
            <person name="Huang K.L."/>
            <person name="Chiang W."/>
            <person name="Russell W.K."/>
            <person name="Williams K."/>
            <person name="Proschel C."/>
            <person name="Wagner E.J."/>
            <person name="Tong L."/>
        </authorList>
    </citation>
    <scope>IDENTIFICATION IN THE INTEGRATOR COMPLEX</scope>
    <scope>SUBCELLULAR LOCATION</scope>
</reference>
<keyword id="KW-0963">Cytoplasm</keyword>
<keyword id="KW-0472">Membrane</keyword>
<keyword id="KW-0539">Nucleus</keyword>
<keyword id="KW-1185">Reference proteome</keyword>
<keyword id="KW-0812">Transmembrane</keyword>
<keyword id="KW-1133">Transmembrane helix</keyword>
<comment type="function">
    <text evidence="4 5 7">Component of the integrator complex, a multiprotein complex that terminates RNA polymerase II (Pol II) transcription in the promoter-proximal region of genes (PubMed:21078872, PubMed:23097424, PubMed:32966759). The integrator complex provides a quality checkpoint during transcription elongation by driving premature transcription termination of transcripts that are unfavorably configured for transcriptional elongation: the complex terminates transcription by (1) catalyzing dephosphorylation of the C-terminal domain (CTD) of Pol II subunit Polr2A/Rbp1 and Spt5, and (2) degrading the exiting nascent RNA transcript via endonuclease activity (PubMed:32966759). The integrator complex is also involved in the 3'-end processing of the U7 snRNA, and also the spliceosomal snRNAs U1, U2, U4 and U5 (PubMed:21078872, PubMed:23097424).</text>
</comment>
<comment type="subunit">
    <text evidence="5 6 7 8 9">Belongs to the multiprotein complex Integrator, at least composed of IntS1, IntS2, IntS3, IntS4, omd/IntS5, IntS6, defl/IntS7, IntS8, IntS9, IntS10, IntS11, IntS12, asun/IntS13, IntS14 and IntS15 (PubMed:23097424, PubMed:31530651, PubMed:32966759, PubMed:37995689, PubMed:39032490). The core complex associates with protein phosphatase 2A subunits mts/PP2A and Pp2A-29B, to form the Integrator-PP2A (INTAC) complex (PubMed:32966759, PubMed:37995689).</text>
</comment>
<comment type="subcellular location">
    <subcellularLocation>
        <location evidence="12">Nucleus membrane</location>
        <topology evidence="2">Multi-pass membrane protein</topology>
    </subcellularLocation>
    <subcellularLocation>
        <location evidence="9">Nucleus</location>
    </subcellularLocation>
    <subcellularLocation>
        <location evidence="1">Cytoplasm</location>
    </subcellularLocation>
</comment>
<comment type="similarity">
    <text evidence="12">Belongs to the Integrator subunit 5 family.</text>
</comment>
<comment type="sequence caution" evidence="12">
    <conflict type="erroneous initiation">
        <sequence resource="EMBL-CDS" id="AAL29156"/>
    </conflict>
    <text>Truncated N-terminus.</text>
</comment>
<feature type="chain" id="PRO_0000437748" description="Integrator complex subunit 5">
    <location>
        <begin position="1"/>
        <end position="994"/>
    </location>
</feature>
<feature type="transmembrane region" description="Helical" evidence="2">
    <location>
        <begin position="769"/>
        <end position="786"/>
    </location>
</feature>
<feature type="transmembrane region" description="Helical" evidence="2">
    <location>
        <begin position="810"/>
        <end position="826"/>
    </location>
</feature>
<feature type="region of interest" description="Disordered" evidence="3">
    <location>
        <begin position="559"/>
        <end position="586"/>
    </location>
</feature>
<feature type="compositionally biased region" description="Basic and acidic residues" evidence="3">
    <location>
        <begin position="571"/>
        <end position="583"/>
    </location>
</feature>
<name>INT5_DROME</name>
<organism evidence="16">
    <name type="scientific">Drosophila melanogaster</name>
    <name type="common">Fruit fly</name>
    <dbReference type="NCBI Taxonomy" id="7227"/>
    <lineage>
        <taxon>Eukaryota</taxon>
        <taxon>Metazoa</taxon>
        <taxon>Ecdysozoa</taxon>
        <taxon>Arthropoda</taxon>
        <taxon>Hexapoda</taxon>
        <taxon>Insecta</taxon>
        <taxon>Pterygota</taxon>
        <taxon>Neoptera</taxon>
        <taxon>Endopterygota</taxon>
        <taxon>Diptera</taxon>
        <taxon>Brachycera</taxon>
        <taxon>Muscomorpha</taxon>
        <taxon>Ephydroidea</taxon>
        <taxon>Drosophilidae</taxon>
        <taxon>Drosophila</taxon>
        <taxon>Sophophora</taxon>
    </lineage>
</organism>
<evidence type="ECO:0000250" key="1">
    <source>
        <dbReference type="UniProtKB" id="Q6P9B9"/>
    </source>
</evidence>
<evidence type="ECO:0000255" key="2"/>
<evidence type="ECO:0000256" key="3">
    <source>
        <dbReference type="SAM" id="MobiDB-lite"/>
    </source>
</evidence>
<evidence type="ECO:0000269" key="4">
    <source>
    </source>
</evidence>
<evidence type="ECO:0000269" key="5">
    <source>
    </source>
</evidence>
<evidence type="ECO:0000269" key="6">
    <source>
    </source>
</evidence>
<evidence type="ECO:0000269" key="7">
    <source>
    </source>
</evidence>
<evidence type="ECO:0000269" key="8">
    <source>
    </source>
</evidence>
<evidence type="ECO:0000269" key="9">
    <source>
    </source>
</evidence>
<evidence type="ECO:0000303" key="10">
    <source>
    </source>
</evidence>
<evidence type="ECO:0000303" key="11">
    <source>
    </source>
</evidence>
<evidence type="ECO:0000305" key="12"/>
<evidence type="ECO:0000312" key="13">
    <source>
        <dbReference type="EMBL" id="AAL29156.1"/>
    </source>
</evidence>
<evidence type="ECO:0000312" key="14">
    <source>
        <dbReference type="EMBL" id="AAR96207.1"/>
    </source>
</evidence>
<evidence type="ECO:0000312" key="15">
    <source>
        <dbReference type="FlyBase" id="FBgn0038168"/>
    </source>
</evidence>
<evidence type="ECO:0000312" key="16">
    <source>
        <dbReference type="Proteomes" id="UP000000803"/>
    </source>
</evidence>
<accession>Q9VFS6</accession>
<accession>Q95R54</accession>
<gene>
    <name evidence="15" type="primary">omd</name>
    <name evidence="10 11" type="synonym">IntS5</name>
    <name evidence="15" type="ORF">CG9591</name>
</gene>
<protein>
    <recommendedName>
        <fullName evidence="10">Integrator complex subunit 5</fullName>
    </recommendedName>
    <alternativeName>
        <fullName evidence="15">Protein oocyte maintenance defects</fullName>
    </alternativeName>
</protein>
<dbReference type="EMBL" id="AE014297">
    <property type="protein sequence ID" value="AAF54973.2"/>
    <property type="molecule type" value="Genomic_DNA"/>
</dbReference>
<dbReference type="EMBL" id="AE014297">
    <property type="protein sequence ID" value="AGB95924.1"/>
    <property type="molecule type" value="Genomic_DNA"/>
</dbReference>
<dbReference type="EMBL" id="AE014297">
    <property type="protein sequence ID" value="AGB95925.1"/>
    <property type="molecule type" value="Genomic_DNA"/>
</dbReference>
<dbReference type="EMBL" id="BT011415">
    <property type="protein sequence ID" value="AAR96207.1"/>
    <property type="molecule type" value="mRNA"/>
</dbReference>
<dbReference type="EMBL" id="AY061608">
    <property type="protein sequence ID" value="AAL29156.1"/>
    <property type="status" value="ALT_INIT"/>
    <property type="molecule type" value="mRNA"/>
</dbReference>
<dbReference type="RefSeq" id="NP_001262542.1">
    <property type="nucleotide sequence ID" value="NM_001275613.1"/>
</dbReference>
<dbReference type="RefSeq" id="NP_001262543.1">
    <property type="nucleotide sequence ID" value="NM_001275614.1"/>
</dbReference>
<dbReference type="RefSeq" id="NP_650303.1">
    <property type="nucleotide sequence ID" value="NM_142046.2"/>
</dbReference>
<dbReference type="SMR" id="Q9VFS6"/>
<dbReference type="FunCoup" id="Q9VFS6">
    <property type="interactions" value="2377"/>
</dbReference>
<dbReference type="IntAct" id="Q9VFS6">
    <property type="interactions" value="2"/>
</dbReference>
<dbReference type="STRING" id="7227.FBpp0082313"/>
<dbReference type="PaxDb" id="7227-FBpp0082313"/>
<dbReference type="DNASU" id="41674"/>
<dbReference type="EnsemblMetazoa" id="FBtr0082848">
    <property type="protein sequence ID" value="FBpp0082313"/>
    <property type="gene ID" value="FBgn0038168"/>
</dbReference>
<dbReference type="EnsemblMetazoa" id="FBtr0334530">
    <property type="protein sequence ID" value="FBpp0306597"/>
    <property type="gene ID" value="FBgn0038168"/>
</dbReference>
<dbReference type="EnsemblMetazoa" id="FBtr0334531">
    <property type="protein sequence ID" value="FBpp0306598"/>
    <property type="gene ID" value="FBgn0038168"/>
</dbReference>
<dbReference type="GeneID" id="41674"/>
<dbReference type="KEGG" id="dme:Dmel_CG9591"/>
<dbReference type="UCSC" id="CG9591-RA">
    <property type="organism name" value="d. melanogaster"/>
</dbReference>
<dbReference type="AGR" id="FB:FBgn0038168"/>
<dbReference type="CTD" id="4958"/>
<dbReference type="FlyBase" id="FBgn0038168">
    <property type="gene designation" value="omd"/>
</dbReference>
<dbReference type="VEuPathDB" id="VectorBase:FBgn0038168"/>
<dbReference type="eggNOG" id="ENOG502QPVK">
    <property type="taxonomic scope" value="Eukaryota"/>
</dbReference>
<dbReference type="GeneTree" id="ENSGT00390000008374"/>
<dbReference type="HOGENOM" id="CLU_013732_0_0_1"/>
<dbReference type="InParanoid" id="Q9VFS6"/>
<dbReference type="OMA" id="KDFCVHS"/>
<dbReference type="OrthoDB" id="69088at2759"/>
<dbReference type="PhylomeDB" id="Q9VFS6"/>
<dbReference type="Reactome" id="R-DME-6807505">
    <property type="pathway name" value="RNA polymerase II transcribes snRNA genes"/>
</dbReference>
<dbReference type="BioGRID-ORCS" id="41674">
    <property type="hits" value="1 hit in 1 CRISPR screen"/>
</dbReference>
<dbReference type="GenomeRNAi" id="41674"/>
<dbReference type="PRO" id="PR:Q9VFS6"/>
<dbReference type="Proteomes" id="UP000000803">
    <property type="component" value="Chromosome 3R"/>
</dbReference>
<dbReference type="Bgee" id="FBgn0038168">
    <property type="expression patterns" value="Expressed in visual pigment cell (sensu Nematoda and Protostomia) in testis and 97 other cell types or tissues"/>
</dbReference>
<dbReference type="GO" id="GO:0005737">
    <property type="term" value="C:cytoplasm"/>
    <property type="evidence" value="ECO:0000250"/>
    <property type="project" value="UniProtKB"/>
</dbReference>
<dbReference type="GO" id="GO:0005829">
    <property type="term" value="C:cytosol"/>
    <property type="evidence" value="ECO:0000314"/>
    <property type="project" value="FlyBase"/>
</dbReference>
<dbReference type="GO" id="GO:0160232">
    <property type="term" value="C:INTAC complex"/>
    <property type="evidence" value="ECO:0000314"/>
    <property type="project" value="UniProtKB"/>
</dbReference>
<dbReference type="GO" id="GO:0032039">
    <property type="term" value="C:integrator complex"/>
    <property type="evidence" value="ECO:0000314"/>
    <property type="project" value="UniProtKB"/>
</dbReference>
<dbReference type="GO" id="GO:0031965">
    <property type="term" value="C:nuclear membrane"/>
    <property type="evidence" value="ECO:0007669"/>
    <property type="project" value="UniProtKB-SubCell"/>
</dbReference>
<dbReference type="GO" id="GO:0005634">
    <property type="term" value="C:nucleus"/>
    <property type="evidence" value="ECO:0000314"/>
    <property type="project" value="FlyBase"/>
</dbReference>
<dbReference type="GO" id="GO:0003677">
    <property type="term" value="F:DNA binding"/>
    <property type="evidence" value="ECO:0000314"/>
    <property type="project" value="FlyBase"/>
</dbReference>
<dbReference type="GO" id="GO:0030514">
    <property type="term" value="P:negative regulation of BMP signaling pathway"/>
    <property type="evidence" value="ECO:0000315"/>
    <property type="project" value="FlyBase"/>
</dbReference>
<dbReference type="GO" id="GO:0010628">
    <property type="term" value="P:positive regulation of gene expression"/>
    <property type="evidence" value="ECO:0000315"/>
    <property type="project" value="FlyBase"/>
</dbReference>
<dbReference type="GO" id="GO:0045666">
    <property type="term" value="P:positive regulation of neuron differentiation"/>
    <property type="evidence" value="ECO:0000315"/>
    <property type="project" value="FlyBase"/>
</dbReference>
<dbReference type="GO" id="GO:0160240">
    <property type="term" value="P:RNA polymerase II transcription initiation surveillance"/>
    <property type="evidence" value="ECO:0000314"/>
    <property type="project" value="UniProtKB"/>
</dbReference>
<dbReference type="GO" id="GO:0034472">
    <property type="term" value="P:snRNA 3'-end processing"/>
    <property type="evidence" value="ECO:0000314"/>
    <property type="project" value="FlyBase"/>
</dbReference>
<dbReference type="InterPro" id="IPR040316">
    <property type="entry name" value="INTS5"/>
</dbReference>
<dbReference type="InterPro" id="IPR029444">
    <property type="entry name" value="INTS5_C"/>
</dbReference>
<dbReference type="InterPro" id="IPR029445">
    <property type="entry name" value="INTS5_N"/>
</dbReference>
<dbReference type="PANTHER" id="PTHR31697">
    <property type="entry name" value="INTEGRATOR COMPLEX SUBUNIT 5"/>
    <property type="match status" value="1"/>
</dbReference>
<dbReference type="PANTHER" id="PTHR31697:SF2">
    <property type="entry name" value="INTEGRATOR COMPLEX SUBUNIT 5"/>
    <property type="match status" value="1"/>
</dbReference>
<dbReference type="Pfam" id="PF14838">
    <property type="entry name" value="INTS5_C"/>
    <property type="match status" value="2"/>
</dbReference>
<dbReference type="Pfam" id="PF14837">
    <property type="entry name" value="INTS5_N"/>
    <property type="match status" value="1"/>
</dbReference>
<sequence>MLRQNLLDQLKHFIETVSNGHSCPQLLTSPNLIKLALGFLEELPATRDIVFEYFALLAEISVQLYVSPEMADPKTGMPVSQVKLAGNRQQQQRAPEYEAFNLVKTALQSLVWKGPPAWSPLIANWSLELVAKLSDKYTQRRMTITASCNYWLECSAMHGLMTLINSCFRKLTQPEEEACVEIMLNAFHRFPMTFDWIVARLGGCFPYKIIMQILQCGIKRFVDDYRCHLDSEAGILDYMTSCHEQHLRAAFREMLREGFAPKKPLDVAVVPFLLITTNYSDTILQSLVNVLVEIYTEDMCEVIVQKAPLWLSNKMFAGMQPTLNNAVLRLNERGATLLLTAAKMAEKYVWCQDFLDNSMQELEQWVLNQRNFPLLADLAYEETKYMLWKSCLSTNLFEQQTAVRLLLVVSSQHPNIYYQTISQLLKKSYAQNPNGIGALIRLLGGQSGMVNFPGFTPGFKMVLEDITLDVQVNNRLPVPPGTPTEAFNTFSNLNILARMHKSKNVAPYIKAQHLNQALNECLPKILQIFDCTVNKLVLRIDRDAAERIADKFRAQQSKNSNNNNELCNGKDYGKRTKLEPGEDKVDDEDATRMRLAHLIVDLLNNIEAGSRTTVLRTPLVLKLATLSVKYFFVGLTEKTVIRRAAASHRSYTLLQRQCSARKIARTVCLRELVERALFYHGHLLGQLEVYQLDELEIPEHEHLILQNLHTSSGANSNRSVLHSGIIGRGLRPVLPPSERNCDAEKQALYLKALNACCADLEKPNNVEGYSLVSLLLVELVSTDVMYNGLPFPDEEFTRVTMERDMLIRRAFINSPVLWAVLGLIAGHRPALCYSSVLLRALCATCLHHWRGKNVNRFQPTAANDELMLCTKKMLQLLAMSQLIPPPLTNLHLIIEHFESAEIALLLRECIWNYLKDHVPSPALFHVDNNGLHWRNTNTQLAKVPPQYVDPLRHLMQRKLSTLGPHYHQMFIMGELMEGDSEPDPTARLQIVEID</sequence>